<dbReference type="EMBL" id="D43693">
    <property type="protein sequence ID" value="BAA07790.1"/>
    <property type="molecule type" value="Genomic_DNA"/>
</dbReference>
<dbReference type="EMBL" id="Z50046">
    <property type="protein sequence ID" value="CAA90382.1"/>
    <property type="molecule type" value="Genomic_DNA"/>
</dbReference>
<dbReference type="EMBL" id="AY557678">
    <property type="protein sequence ID" value="AAS56004.1"/>
    <property type="molecule type" value="Genomic_DNA"/>
</dbReference>
<dbReference type="EMBL" id="BK006938">
    <property type="protein sequence ID" value="DAA12002.1"/>
    <property type="molecule type" value="Genomic_DNA"/>
</dbReference>
<dbReference type="PIR" id="S57986">
    <property type="entry name" value="S57986"/>
</dbReference>
<dbReference type="RefSeq" id="NP_010446.3">
    <property type="nucleotide sequence ID" value="NM_001180469.3"/>
</dbReference>
<dbReference type="PDB" id="1YN8">
    <property type="method" value="X-ray"/>
    <property type="resolution" value="1.70 A"/>
    <property type="chains" value="A/B/C/D/E/F=113-170"/>
</dbReference>
<dbReference type="PDB" id="2LCS">
    <property type="method" value="NMR"/>
    <property type="chains" value="A=110-172"/>
</dbReference>
<dbReference type="PDBsum" id="1YN8"/>
<dbReference type="PDBsum" id="2LCS"/>
<dbReference type="BMRB" id="Q12163"/>
<dbReference type="SMR" id="Q12163"/>
<dbReference type="BioGRID" id="32213">
    <property type="interactions" value="715"/>
</dbReference>
<dbReference type="DIP" id="DIP-1538N"/>
<dbReference type="FunCoup" id="Q12163">
    <property type="interactions" value="236"/>
</dbReference>
<dbReference type="IntAct" id="Q12163">
    <property type="interactions" value="12"/>
</dbReference>
<dbReference type="MINT" id="Q12163"/>
<dbReference type="STRING" id="4932.YDR162C"/>
<dbReference type="iPTMnet" id="Q12163"/>
<dbReference type="PaxDb" id="4932-YDR162C"/>
<dbReference type="PeptideAtlas" id="Q12163"/>
<dbReference type="EnsemblFungi" id="YDR162C_mRNA">
    <property type="protein sequence ID" value="YDR162C"/>
    <property type="gene ID" value="YDR162C"/>
</dbReference>
<dbReference type="GeneID" id="851740"/>
<dbReference type="KEGG" id="sce:YDR162C"/>
<dbReference type="AGR" id="SGD:S000002569"/>
<dbReference type="SGD" id="S000002569">
    <property type="gene designation" value="NBP2"/>
</dbReference>
<dbReference type="VEuPathDB" id="FungiDB:YDR162C"/>
<dbReference type="eggNOG" id="ENOG502RZ32">
    <property type="taxonomic scope" value="Eukaryota"/>
</dbReference>
<dbReference type="HOGENOM" id="CLU_069841_1_0_1"/>
<dbReference type="InParanoid" id="Q12163"/>
<dbReference type="OMA" id="PFYLTHM"/>
<dbReference type="OrthoDB" id="19092at2759"/>
<dbReference type="BioCyc" id="YEAST:G3O-29752-MONOMER"/>
<dbReference type="BioGRID-ORCS" id="851740">
    <property type="hits" value="0 hits in 10 CRISPR screens"/>
</dbReference>
<dbReference type="EvolutionaryTrace" id="Q12163"/>
<dbReference type="PRO" id="PR:Q12163"/>
<dbReference type="Proteomes" id="UP000002311">
    <property type="component" value="Chromosome IV"/>
</dbReference>
<dbReference type="RNAct" id="Q12163">
    <property type="molecule type" value="protein"/>
</dbReference>
<dbReference type="GO" id="GO:0005737">
    <property type="term" value="C:cytoplasm"/>
    <property type="evidence" value="ECO:0000314"/>
    <property type="project" value="SGD"/>
</dbReference>
<dbReference type="GO" id="GO:0005634">
    <property type="term" value="C:nucleus"/>
    <property type="evidence" value="ECO:0007005"/>
    <property type="project" value="SGD"/>
</dbReference>
<dbReference type="GO" id="GO:0030674">
    <property type="term" value="F:protein-macromolecule adaptor activity"/>
    <property type="evidence" value="ECO:0000315"/>
    <property type="project" value="SGD"/>
</dbReference>
<dbReference type="GO" id="GO:0071852">
    <property type="term" value="P:fungal-type cell wall organization or biogenesis"/>
    <property type="evidence" value="ECO:0000315"/>
    <property type="project" value="SGD"/>
</dbReference>
<dbReference type="GO" id="GO:0043409">
    <property type="term" value="P:negative regulation of MAPK cascade"/>
    <property type="evidence" value="ECO:0000315"/>
    <property type="project" value="SGD"/>
</dbReference>
<dbReference type="CDD" id="cd11865">
    <property type="entry name" value="SH3_Nbp2-like"/>
    <property type="match status" value="1"/>
</dbReference>
<dbReference type="FunFam" id="2.30.30.40:FF:000283">
    <property type="entry name" value="NAP1-binding protein 2"/>
    <property type="match status" value="1"/>
</dbReference>
<dbReference type="Gene3D" id="2.30.30.40">
    <property type="entry name" value="SH3 Domains"/>
    <property type="match status" value="1"/>
</dbReference>
<dbReference type="InterPro" id="IPR036028">
    <property type="entry name" value="SH3-like_dom_sf"/>
</dbReference>
<dbReference type="InterPro" id="IPR001452">
    <property type="entry name" value="SH3_domain"/>
</dbReference>
<dbReference type="Pfam" id="PF00018">
    <property type="entry name" value="SH3_1"/>
    <property type="match status" value="1"/>
</dbReference>
<dbReference type="SMART" id="SM00326">
    <property type="entry name" value="SH3"/>
    <property type="match status" value="1"/>
</dbReference>
<dbReference type="SUPFAM" id="SSF50044">
    <property type="entry name" value="SH3-domain"/>
    <property type="match status" value="1"/>
</dbReference>
<dbReference type="PROSITE" id="PS50002">
    <property type="entry name" value="SH3"/>
    <property type="match status" value="1"/>
</dbReference>
<gene>
    <name type="primary">NBP2</name>
    <name type="ordered locus">YDR162C</name>
</gene>
<protein>
    <recommendedName>
        <fullName>NAP1-binding protein 2</fullName>
    </recommendedName>
</protein>
<evidence type="ECO:0000255" key="1">
    <source>
        <dbReference type="PROSITE-ProRule" id="PRU00192"/>
    </source>
</evidence>
<evidence type="ECO:0000269" key="2">
    <source>
    </source>
</evidence>
<evidence type="ECO:0000269" key="3">
    <source>
    </source>
</evidence>
<evidence type="ECO:0000269" key="4">
    <source>
    </source>
</evidence>
<evidence type="ECO:0000269" key="5">
    <source>
    </source>
</evidence>
<evidence type="ECO:0007744" key="6">
    <source>
    </source>
</evidence>
<evidence type="ECO:0007744" key="7">
    <source>
    </source>
</evidence>
<evidence type="ECO:0007744" key="8">
    <source>
    </source>
</evidence>
<evidence type="ECO:0007744" key="9">
    <source>
    </source>
</evidence>
<evidence type="ECO:0007829" key="10">
    <source>
        <dbReference type="PDB" id="1YN8"/>
    </source>
</evidence>
<organism>
    <name type="scientific">Saccharomyces cerevisiae (strain ATCC 204508 / S288c)</name>
    <name type="common">Baker's yeast</name>
    <dbReference type="NCBI Taxonomy" id="559292"/>
    <lineage>
        <taxon>Eukaryota</taxon>
        <taxon>Fungi</taxon>
        <taxon>Dikarya</taxon>
        <taxon>Ascomycota</taxon>
        <taxon>Saccharomycotina</taxon>
        <taxon>Saccharomycetes</taxon>
        <taxon>Saccharomycetales</taxon>
        <taxon>Saccharomycetaceae</taxon>
        <taxon>Saccharomyces</taxon>
    </lineage>
</organism>
<keyword id="KW-0002">3D-structure</keyword>
<keyword id="KW-0963">Cytoplasm</keyword>
<keyword id="KW-0597">Phosphoprotein</keyword>
<keyword id="KW-1185">Reference proteome</keyword>
<keyword id="KW-0728">SH3 domain</keyword>
<name>NBP2_YEAST</name>
<feature type="chain" id="PRO_0000257822" description="NAP1-binding protein 2">
    <location>
        <begin position="1"/>
        <end position="236"/>
    </location>
</feature>
<feature type="domain" description="SH3" evidence="1">
    <location>
        <begin position="110"/>
        <end position="171"/>
    </location>
</feature>
<feature type="modified residue" description="Phosphoserine" evidence="8 9">
    <location>
        <position position="102"/>
    </location>
</feature>
<feature type="modified residue" description="Phosphoserine" evidence="6 7 8 9">
    <location>
        <position position="196"/>
    </location>
</feature>
<feature type="modified residue" description="Phosphoserine" evidence="8">
    <location>
        <position position="235"/>
    </location>
</feature>
<feature type="strand" evidence="10">
    <location>
        <begin position="113"/>
        <end position="117"/>
    </location>
</feature>
<feature type="strand" evidence="10">
    <location>
        <begin position="136"/>
        <end position="144"/>
    </location>
</feature>
<feature type="strand" evidence="10">
    <location>
        <begin position="147"/>
        <end position="151"/>
    </location>
</feature>
<feature type="strand" evidence="10">
    <location>
        <begin position="158"/>
        <end position="162"/>
    </location>
</feature>
<feature type="helix" evidence="10">
    <location>
        <begin position="163"/>
        <end position="165"/>
    </location>
</feature>
<feature type="strand" evidence="10">
    <location>
        <begin position="166"/>
        <end position="168"/>
    </location>
</feature>
<proteinExistence type="evidence at protein level"/>
<comment type="function">
    <text evidence="3 4 5">Negatively regulates the high-osmolarity glycerol (HOG) pathway through its negative regulation of the HOG1 kinase activity. Mediates the binding between the PTC1 phosphatase and the PBS2 MAP/ERK kinase (MEK). With PTC1, regulates endoplasmic reticulum inheritance through the cell wall integrity (CWI) MAPK pathway by modulating the MAPK, SLT2.</text>
</comment>
<comment type="subunit">
    <text evidence="4">Interacts with PBS2 and PTC1.</text>
</comment>
<comment type="interaction">
    <interactant intactId="EBI-34713">
        <id>Q12163</id>
    </interactant>
    <interactant intactId="EBI-25376">
        <id>P40563</id>
        <label>AIM21</label>
    </interactant>
    <organismsDiffer>false</organismsDiffer>
    <experiments>4</experiments>
</comment>
<comment type="interaction">
    <interactant intactId="EBI-34713">
        <id>Q12163</id>
    </interactant>
    <interactant intactId="EBI-4750">
        <id>P48562</id>
        <label>CLA4</label>
    </interactant>
    <organismsDiffer>false</organismsDiffer>
    <experiments>3</experiments>
</comment>
<comment type="interaction">
    <interactant intactId="EBI-34713">
        <id>Q12163</id>
    </interactant>
    <interactant intactId="EBI-12972">
        <id>P08018</id>
        <label>PBS2</label>
    </interactant>
    <organismsDiffer>false</organismsDiffer>
    <experiments>3</experiments>
</comment>
<comment type="interaction">
    <interactant intactId="EBI-34713">
        <id>Q12163</id>
    </interactant>
    <interactant intactId="EBI-12784">
        <id>P35182</id>
        <label>PTC1</label>
    </interactant>
    <organismsDiffer>false</organismsDiffer>
    <experiments>4</experiments>
</comment>
<comment type="interaction">
    <interactant intactId="EBI-34713">
        <id>Q12163</id>
    </interactant>
    <interactant intactId="EBI-18285">
        <id>Q03497</id>
        <label>STE20</label>
    </interactant>
    <organismsDiffer>false</organismsDiffer>
    <experiments>6</experiments>
</comment>
<comment type="subcellular location">
    <subcellularLocation>
        <location evidence="3">Cytoplasm</location>
    </subcellularLocation>
</comment>
<comment type="miscellaneous">
    <text evidence="2">Present with 521 molecules/cell in log phase SD medium.</text>
</comment>
<accession>Q12163</accession>
<accession>D6VSE2</accession>
<sequence length="236" mass="26571">MATMETTTQKDTNILKSGLKKTIGVLNEAVLQNGREVEAVQAGNSDTMEDTETTTIGYISIKDYAYADSNPLHYGYFDGDNEEDEMVSDSSNGEDTYNKRQSITLPDDYIVNQRAVALYDFEPENDNELRLAEGDIVFISYKHGQGWLVAENESGSKTGLVPEEFVSYIQPEDGENEVENKARPFYLTHLITQSVSPKNNIDNTNEDEYDDNDEWEDIDDVAEVEADMKTKLDISD</sequence>
<reference key="1">
    <citation type="submission" date="1994-12" db="EMBL/GenBank/DDBJ databases">
        <authorList>
            <person name="Okuda A."/>
            <person name="Fujii-Nakata T."/>
            <person name="Kikuchi A."/>
        </authorList>
    </citation>
    <scope>NUCLEOTIDE SEQUENCE [GENOMIC DNA]</scope>
    <source>
        <strain>SFY526</strain>
    </source>
</reference>
<reference key="2">
    <citation type="journal article" date="1997" name="Nature">
        <title>The nucleotide sequence of Saccharomyces cerevisiae chromosome IV.</title>
        <authorList>
            <person name="Jacq C."/>
            <person name="Alt-Moerbe J."/>
            <person name="Andre B."/>
            <person name="Arnold W."/>
            <person name="Bahr A."/>
            <person name="Ballesta J.P.G."/>
            <person name="Bargues M."/>
            <person name="Baron L."/>
            <person name="Becker A."/>
            <person name="Biteau N."/>
            <person name="Bloecker H."/>
            <person name="Blugeon C."/>
            <person name="Boskovic J."/>
            <person name="Brandt P."/>
            <person name="Brueckner M."/>
            <person name="Buitrago M.J."/>
            <person name="Coster F."/>
            <person name="Delaveau T."/>
            <person name="del Rey F."/>
            <person name="Dujon B."/>
            <person name="Eide L.G."/>
            <person name="Garcia-Cantalejo J.M."/>
            <person name="Goffeau A."/>
            <person name="Gomez-Peris A."/>
            <person name="Granotier C."/>
            <person name="Hanemann V."/>
            <person name="Hankeln T."/>
            <person name="Hoheisel J.D."/>
            <person name="Jaeger W."/>
            <person name="Jimenez A."/>
            <person name="Jonniaux J.-L."/>
            <person name="Kraemer C."/>
            <person name="Kuester H."/>
            <person name="Laamanen P."/>
            <person name="Legros Y."/>
            <person name="Louis E.J."/>
            <person name="Moeller-Rieker S."/>
            <person name="Monnet A."/>
            <person name="Moro M."/>
            <person name="Mueller-Auer S."/>
            <person name="Nussbaumer B."/>
            <person name="Paricio N."/>
            <person name="Paulin L."/>
            <person name="Perea J."/>
            <person name="Perez-Alonso M."/>
            <person name="Perez-Ortin J.E."/>
            <person name="Pohl T.M."/>
            <person name="Prydz H."/>
            <person name="Purnelle B."/>
            <person name="Rasmussen S.W."/>
            <person name="Remacha M.A."/>
            <person name="Revuelta J.L."/>
            <person name="Rieger M."/>
            <person name="Salom D."/>
            <person name="Saluz H.P."/>
            <person name="Saiz J.E."/>
            <person name="Saren A.-M."/>
            <person name="Schaefer M."/>
            <person name="Scharfe M."/>
            <person name="Schmidt E.R."/>
            <person name="Schneider C."/>
            <person name="Scholler P."/>
            <person name="Schwarz S."/>
            <person name="Soler-Mira A."/>
            <person name="Urrestarazu L.A."/>
            <person name="Verhasselt P."/>
            <person name="Vissers S."/>
            <person name="Voet M."/>
            <person name="Volckaert G."/>
            <person name="Wagner G."/>
            <person name="Wambutt R."/>
            <person name="Wedler E."/>
            <person name="Wedler H."/>
            <person name="Woelfl S."/>
            <person name="Harris D.E."/>
            <person name="Bowman S."/>
            <person name="Brown D."/>
            <person name="Churcher C.M."/>
            <person name="Connor R."/>
            <person name="Dedman K."/>
            <person name="Gentles S."/>
            <person name="Hamlin N."/>
            <person name="Hunt S."/>
            <person name="Jones L."/>
            <person name="McDonald S."/>
            <person name="Murphy L.D."/>
            <person name="Niblett D."/>
            <person name="Odell C."/>
            <person name="Oliver K."/>
            <person name="Rajandream M.A."/>
            <person name="Richards C."/>
            <person name="Shore L."/>
            <person name="Walsh S.V."/>
            <person name="Barrell B.G."/>
            <person name="Dietrich F.S."/>
            <person name="Mulligan J.T."/>
            <person name="Allen E."/>
            <person name="Araujo R."/>
            <person name="Aviles E."/>
            <person name="Berno A."/>
            <person name="Carpenter J."/>
            <person name="Chen E."/>
            <person name="Cherry J.M."/>
            <person name="Chung E."/>
            <person name="Duncan M."/>
            <person name="Hunicke-Smith S."/>
            <person name="Hyman R.W."/>
            <person name="Komp C."/>
            <person name="Lashkari D."/>
            <person name="Lew H."/>
            <person name="Lin D."/>
            <person name="Mosedale D."/>
            <person name="Nakahara K."/>
            <person name="Namath A."/>
            <person name="Oefner P."/>
            <person name="Oh C."/>
            <person name="Petel F.X."/>
            <person name="Roberts D."/>
            <person name="Schramm S."/>
            <person name="Schroeder M."/>
            <person name="Shogren T."/>
            <person name="Shroff N."/>
            <person name="Winant A."/>
            <person name="Yelton M.A."/>
            <person name="Botstein D."/>
            <person name="Davis R.W."/>
            <person name="Johnston M."/>
            <person name="Andrews S."/>
            <person name="Brinkman R."/>
            <person name="Cooper J."/>
            <person name="Ding H."/>
            <person name="Du Z."/>
            <person name="Favello A."/>
            <person name="Fulton L."/>
            <person name="Gattung S."/>
            <person name="Greco T."/>
            <person name="Hallsworth K."/>
            <person name="Hawkins J."/>
            <person name="Hillier L.W."/>
            <person name="Jier M."/>
            <person name="Johnson D."/>
            <person name="Johnston L."/>
            <person name="Kirsten J."/>
            <person name="Kucaba T."/>
            <person name="Langston Y."/>
            <person name="Latreille P."/>
            <person name="Le T."/>
            <person name="Mardis E."/>
            <person name="Menezes S."/>
            <person name="Miller N."/>
            <person name="Nhan M."/>
            <person name="Pauley A."/>
            <person name="Peluso D."/>
            <person name="Rifkin L."/>
            <person name="Riles L."/>
            <person name="Taich A."/>
            <person name="Trevaskis E."/>
            <person name="Vignati D."/>
            <person name="Wilcox L."/>
            <person name="Wohldman P."/>
            <person name="Vaudin M."/>
            <person name="Wilson R."/>
            <person name="Waterston R."/>
            <person name="Albermann K."/>
            <person name="Hani J."/>
            <person name="Heumann K."/>
            <person name="Kleine K."/>
            <person name="Mewes H.-W."/>
            <person name="Zollner A."/>
            <person name="Zaccaria P."/>
        </authorList>
    </citation>
    <scope>NUCLEOTIDE SEQUENCE [LARGE SCALE GENOMIC DNA]</scope>
    <source>
        <strain>ATCC 204508 / S288c</strain>
    </source>
</reference>
<reference key="3">
    <citation type="journal article" date="2014" name="G3 (Bethesda)">
        <title>The reference genome sequence of Saccharomyces cerevisiae: Then and now.</title>
        <authorList>
            <person name="Engel S.R."/>
            <person name="Dietrich F.S."/>
            <person name="Fisk D.G."/>
            <person name="Binkley G."/>
            <person name="Balakrishnan R."/>
            <person name="Costanzo M.C."/>
            <person name="Dwight S.S."/>
            <person name="Hitz B.C."/>
            <person name="Karra K."/>
            <person name="Nash R.S."/>
            <person name="Weng S."/>
            <person name="Wong E.D."/>
            <person name="Lloyd P."/>
            <person name="Skrzypek M.S."/>
            <person name="Miyasato S.R."/>
            <person name="Simison M."/>
            <person name="Cherry J.M."/>
        </authorList>
    </citation>
    <scope>GENOME REANNOTATION</scope>
    <source>
        <strain>ATCC 204508 / S288c</strain>
    </source>
</reference>
<reference key="4">
    <citation type="journal article" date="2007" name="Genome Res.">
        <title>Approaching a complete repository of sequence-verified protein-encoding clones for Saccharomyces cerevisiae.</title>
        <authorList>
            <person name="Hu Y."/>
            <person name="Rolfs A."/>
            <person name="Bhullar B."/>
            <person name="Murthy T.V.S."/>
            <person name="Zhu C."/>
            <person name="Berger M.F."/>
            <person name="Camargo A.A."/>
            <person name="Kelley F."/>
            <person name="McCarron S."/>
            <person name="Jepson D."/>
            <person name="Richardson A."/>
            <person name="Raphael J."/>
            <person name="Moreira D."/>
            <person name="Taycher E."/>
            <person name="Zuo D."/>
            <person name="Mohr S."/>
            <person name="Kane M.F."/>
            <person name="Williamson J."/>
            <person name="Simpson A.J.G."/>
            <person name="Bulyk M.L."/>
            <person name="Harlow E."/>
            <person name="Marsischky G."/>
            <person name="Kolodner R.D."/>
            <person name="LaBaer J."/>
        </authorList>
    </citation>
    <scope>NUCLEOTIDE SEQUENCE [GENOMIC DNA]</scope>
    <source>
        <strain>ATCC 204508 / S288c</strain>
    </source>
</reference>
<reference key="5">
    <citation type="journal article" date="2003" name="Genetics">
        <title>Yeast Nap1-binding protein Nbp2p is required for mitotic growth at high temperatures and for cell wall integrity.</title>
        <authorList>
            <person name="Ohkuni K."/>
            <person name="Okuda A."/>
            <person name="Kikuchi A."/>
        </authorList>
    </citation>
    <scope>FUNCTION</scope>
    <scope>SUBCELLULAR LOCATION</scope>
</reference>
<reference key="6">
    <citation type="journal article" date="2003" name="Nature">
        <title>Global analysis of protein expression in yeast.</title>
        <authorList>
            <person name="Ghaemmaghami S."/>
            <person name="Huh W.-K."/>
            <person name="Bower K."/>
            <person name="Howson R.W."/>
            <person name="Belle A."/>
            <person name="Dephoure N."/>
            <person name="O'Shea E.K."/>
            <person name="Weissman J.S."/>
        </authorList>
    </citation>
    <scope>LEVEL OF PROTEIN EXPRESSION [LARGE SCALE ANALYSIS]</scope>
</reference>
<reference key="7">
    <citation type="journal article" date="2004" name="EMBO J.">
        <title>Nbp2 targets the Ptc1-type 2C Ser/Thr phosphatase to the HOG MAPK pathway.</title>
        <authorList>
            <person name="Mapes J."/>
            <person name="Ota I.M."/>
        </authorList>
    </citation>
    <scope>FUNCTION</scope>
    <scope>INTERACTION WITH PTC1 AND PBS2</scope>
</reference>
<reference key="8">
    <citation type="journal article" date="2006" name="EMBO J.">
        <title>Ptc1p regulates cortical ER inheritance via Slt2p.</title>
        <authorList>
            <person name="Du Y."/>
            <person name="Walker L."/>
            <person name="Novick P."/>
            <person name="Ferro-Novick S."/>
        </authorList>
    </citation>
    <scope>FUNCTION</scope>
</reference>
<reference key="9">
    <citation type="journal article" date="2007" name="J. Proteome Res.">
        <title>Large-scale phosphorylation analysis of alpha-factor-arrested Saccharomyces cerevisiae.</title>
        <authorList>
            <person name="Li X."/>
            <person name="Gerber S.A."/>
            <person name="Rudner A.D."/>
            <person name="Beausoleil S.A."/>
            <person name="Haas W."/>
            <person name="Villen J."/>
            <person name="Elias J.E."/>
            <person name="Gygi S.P."/>
        </authorList>
    </citation>
    <scope>PHOSPHORYLATION [LARGE SCALE ANALYSIS] AT SER-196</scope>
    <scope>IDENTIFICATION BY MASS SPECTROMETRY [LARGE SCALE ANALYSIS]</scope>
    <source>
        <strain>ADR376</strain>
    </source>
</reference>
<reference key="10">
    <citation type="journal article" date="2007" name="Proc. Natl. Acad. Sci. U.S.A.">
        <title>Analysis of phosphorylation sites on proteins from Saccharomyces cerevisiae by electron transfer dissociation (ETD) mass spectrometry.</title>
        <authorList>
            <person name="Chi A."/>
            <person name="Huttenhower C."/>
            <person name="Geer L.Y."/>
            <person name="Coon J.J."/>
            <person name="Syka J.E.P."/>
            <person name="Bai D.L."/>
            <person name="Shabanowitz J."/>
            <person name="Burke D.J."/>
            <person name="Troyanskaya O.G."/>
            <person name="Hunt D.F."/>
        </authorList>
    </citation>
    <scope>PHOSPHORYLATION [LARGE SCALE ANALYSIS] AT SER-196</scope>
    <scope>IDENTIFICATION BY MASS SPECTROMETRY [LARGE SCALE ANALYSIS]</scope>
</reference>
<reference key="11">
    <citation type="journal article" date="2008" name="Mol. Cell. Proteomics">
        <title>A multidimensional chromatography technology for in-depth phosphoproteome analysis.</title>
        <authorList>
            <person name="Albuquerque C.P."/>
            <person name="Smolka M.B."/>
            <person name="Payne S.H."/>
            <person name="Bafna V."/>
            <person name="Eng J."/>
            <person name="Zhou H."/>
        </authorList>
    </citation>
    <scope>PHOSPHORYLATION [LARGE SCALE ANALYSIS] AT SER-102; SER-196 AND SER-235</scope>
    <scope>IDENTIFICATION BY MASS SPECTROMETRY [LARGE SCALE ANALYSIS]</scope>
</reference>
<reference key="12">
    <citation type="journal article" date="2009" name="Science">
        <title>Global analysis of Cdk1 substrate phosphorylation sites provides insights into evolution.</title>
        <authorList>
            <person name="Holt L.J."/>
            <person name="Tuch B.B."/>
            <person name="Villen J."/>
            <person name="Johnson A.D."/>
            <person name="Gygi S.P."/>
            <person name="Morgan D.O."/>
        </authorList>
    </citation>
    <scope>PHOSPHORYLATION [LARGE SCALE ANALYSIS] AT SER-102 AND SER-196</scope>
    <scope>IDENTIFICATION BY MASS SPECTROMETRY [LARGE SCALE ANALYSIS]</scope>
</reference>